<comment type="function">
    <text>Shows antibacterial activity against representative Gram-negative and Gram-positive bacterial species, and a very high hemolytic activity.</text>
</comment>
<comment type="subcellular location">
    <subcellularLocation>
        <location>Secreted</location>
    </subcellularLocation>
</comment>
<comment type="tissue specificity">
    <text>Expressed by the skin glands.</text>
</comment>
<comment type="similarity">
    <text evidence="3">Belongs to the frog skin active peptide (FSAP) family. Brevinin subfamily.</text>
</comment>
<name>BR1_PELLE</name>
<keyword id="KW-0878">Amphibian defense peptide</keyword>
<keyword id="KW-0044">Antibiotic</keyword>
<keyword id="KW-0929">Antimicrobial</keyword>
<keyword id="KW-0165">Cleavage on pair of basic residues</keyword>
<keyword id="KW-0204">Cytolysis</keyword>
<keyword id="KW-0903">Direct protein sequencing</keyword>
<keyword id="KW-1015">Disulfide bond</keyword>
<keyword id="KW-0354">Hemolysis</keyword>
<keyword id="KW-0964">Secreted</keyword>
<keyword id="KW-0732">Signal</keyword>
<evidence type="ECO:0000255" key="1"/>
<evidence type="ECO:0000269" key="2">
    <source>
    </source>
</evidence>
<evidence type="ECO:0000305" key="3"/>
<accession>P32412</accession>
<sequence length="71" mass="8267">MFTLKKSMLLLFFLGTINLSLCEEERDADEEERRDNPDESEVEVEKRFLPLLAGLAANFLPKIFCKITRKC</sequence>
<reference key="1">
    <citation type="journal article" date="1994" name="J. Biol. Chem.">
        <title>Antimicrobial peptides from skin secretions of Rana esculenta. Molecular cloning of cDNAs encoding esculentin and brevinins and isolation of new active peptides.</title>
        <authorList>
            <person name="Simmaco M."/>
            <person name="Mignogna G."/>
            <person name="Barra D."/>
            <person name="Bossa F."/>
        </authorList>
    </citation>
    <scope>NUCLEOTIDE SEQUENCE [MRNA] (VARIANT 1EC)</scope>
    <source>
        <tissue>Skin</tissue>
    </source>
</reference>
<reference key="2">
    <citation type="journal article" date="1993" name="FEBS Lett.">
        <title>Novel antimicrobial peptides from skin secretion of the European frog Rana esculenta.</title>
        <authorList>
            <person name="Simmaco M."/>
            <person name="Mignogna G."/>
            <person name="Barra D."/>
            <person name="Bossa F."/>
        </authorList>
    </citation>
    <scope>PROTEIN SEQUENCE OF 48-71</scope>
    <scope>DISULFIDE BOND</scope>
    <source>
        <tissue>Skin secretion</tissue>
    </source>
</reference>
<organism>
    <name type="scientific">Pelophylax lessonae</name>
    <name type="common">Pool frog</name>
    <name type="synonym">Rana lessonae</name>
    <dbReference type="NCBI Taxonomy" id="45623"/>
    <lineage>
        <taxon>Eukaryota</taxon>
        <taxon>Metazoa</taxon>
        <taxon>Chordata</taxon>
        <taxon>Craniata</taxon>
        <taxon>Vertebrata</taxon>
        <taxon>Euteleostomi</taxon>
        <taxon>Amphibia</taxon>
        <taxon>Batrachia</taxon>
        <taxon>Anura</taxon>
        <taxon>Neobatrachia</taxon>
        <taxon>Ranoidea</taxon>
        <taxon>Ranidae</taxon>
        <taxon>Pelophylax</taxon>
    </lineage>
</organism>
<proteinExistence type="evidence at protein level"/>
<dbReference type="EMBL" id="X77831">
    <property type="protein sequence ID" value="CAA54842.1"/>
    <property type="molecule type" value="mRNA"/>
</dbReference>
<dbReference type="PIR" id="C53578">
    <property type="entry name" value="C53578"/>
</dbReference>
<dbReference type="TCDB" id="1.C.52.1.16">
    <property type="family name" value="the dermaseptin (dermaseptin) family"/>
</dbReference>
<dbReference type="GO" id="GO:0005576">
    <property type="term" value="C:extracellular region"/>
    <property type="evidence" value="ECO:0000314"/>
    <property type="project" value="UniProtKB"/>
</dbReference>
<dbReference type="GO" id="GO:0050829">
    <property type="term" value="P:defense response to Gram-negative bacterium"/>
    <property type="evidence" value="ECO:0000314"/>
    <property type="project" value="UniProtKB"/>
</dbReference>
<dbReference type="GO" id="GO:0050830">
    <property type="term" value="P:defense response to Gram-positive bacterium"/>
    <property type="evidence" value="ECO:0000314"/>
    <property type="project" value="UniProtKB"/>
</dbReference>
<dbReference type="GO" id="GO:0044179">
    <property type="term" value="P:hemolysis in another organism"/>
    <property type="evidence" value="ECO:0000314"/>
    <property type="project" value="UniProtKB"/>
</dbReference>
<dbReference type="InterPro" id="IPR012520">
    <property type="entry name" value="Antimicrobial_frog_1"/>
</dbReference>
<dbReference type="InterPro" id="IPR004275">
    <property type="entry name" value="Frog_antimicrobial_propeptide"/>
</dbReference>
<dbReference type="Pfam" id="PF08018">
    <property type="entry name" value="Antimicrobial_1"/>
    <property type="match status" value="1"/>
</dbReference>
<dbReference type="Pfam" id="PF03032">
    <property type="entry name" value="FSAP_sig_propep"/>
    <property type="match status" value="1"/>
</dbReference>
<protein>
    <recommendedName>
        <fullName>Brevinin-1E</fullName>
    </recommendedName>
</protein>
<feature type="signal peptide" evidence="1">
    <location>
        <begin position="1"/>
        <end position="22"/>
    </location>
</feature>
<feature type="propeptide" id="PRO_0000003443">
    <location>
        <begin position="23"/>
        <end position="45"/>
    </location>
</feature>
<feature type="peptide" id="PRO_0000003444" description="Brevinin-1E">
    <location>
        <begin position="48"/>
        <end position="71"/>
    </location>
</feature>
<feature type="disulfide bond" evidence="2">
    <location>
        <begin position="65"/>
        <end position="71"/>
    </location>
</feature>
<feature type="sequence variant" description="In brevinin-1Ec.">
    <original>L</original>
    <variation>F</variation>
    <location>
        <position position="60"/>
    </location>
</feature>